<feature type="chain" id="PRO_0000335146" description="DNA mismatch repair protein MutS">
    <location>
        <begin position="1"/>
        <end position="856"/>
    </location>
</feature>
<feature type="binding site" evidence="1">
    <location>
        <begin position="607"/>
        <end position="614"/>
    </location>
    <ligand>
        <name>ATP</name>
        <dbReference type="ChEBI" id="CHEBI:30616"/>
    </ligand>
</feature>
<sequence>MKQYNAIKGKYPGALLLFRVGDFYETFSEDAIKASKVLGITLTKRGNGTASETALAGFPHHSLDTYLPRLVRSGLRVAICDQLEDPKSVKGIVKRGVTELVTPGVSFNDHVLDVSKNNYLAAIHFQKDSLGISFLDISTGEFLTAQGDRHYIDKLLQSFSPSEVLFCKQKKEVFIEYFGDRYNTYALEDWIFAYDFTYDLLIRHFQTTSLKGFGIEEMLEGITSAGAILHYLNETEHKEVAHITRVNRIEEERYVWLDRFTIRNLELVNAQQLEGVPLIEILDHTKTPMGARLLKKWLILPLKELTPIQERLDTVELLVKNKELTTTLVDELKPIGDLERLISKVAARRVNPREMVQLKRSLERLVPIQQLLKQQDQHVLLKLAEQINPCEYLAGRILNMLKEDAPMLTNQGRIIRDGCNAELDELRAIAYTGKDYLLQIQQREIERTGISSLKISYNKVFGYYLEVTNTHKEKVPADWIRKQTLTGAERYITEELKIYEEKILGAEDKINVIEQKMFQDLVLEAESYINPILQNARIVAQIDCLCSFAHAAVANNYCKPIVEDSALINIKAGRHPVIEKQLPLGESYIPNDIYLDDETQQVMIITGPNMAGKSALLRQTALIVLMAQAGSFVPATHATIGTVDKVFTRVGASDNLSKGESTFMVEMNETASILNNLSGRSLVLMDEIGRGTSTYDGISIAWAIVEHLHNHPNFRPKTLFATHYHELNQLTEDLKRVKNFNVSVKEAGNKVIFMRTLKPGGSEHSFGIHVAQMAGMPTSLVLRANEIMGHLEKEHVREGHEDKLKEVPKSTLQMSLFEAADPAWDSIKKILTQTDVNIMSPVEALLKLNELKQLIK</sequence>
<comment type="function">
    <text evidence="1">This protein is involved in the repair of mismatches in DNA. It is possible that it carries out the mismatch recognition step. This protein has a weak ATPase activity.</text>
</comment>
<comment type="similarity">
    <text evidence="1">Belongs to the DNA mismatch repair MutS family.</text>
</comment>
<keyword id="KW-0067">ATP-binding</keyword>
<keyword id="KW-0227">DNA damage</keyword>
<keyword id="KW-0234">DNA repair</keyword>
<keyword id="KW-0238">DNA-binding</keyword>
<keyword id="KW-0547">Nucleotide-binding</keyword>
<keyword id="KW-1185">Reference proteome</keyword>
<reference key="1">
    <citation type="journal article" date="2007" name="Appl. Environ. Microbiol.">
        <title>Genome sequence of the cellulolytic gliding bacterium Cytophaga hutchinsonii.</title>
        <authorList>
            <person name="Xie G."/>
            <person name="Bruce D.C."/>
            <person name="Challacombe J.F."/>
            <person name="Chertkov O."/>
            <person name="Detter J.C."/>
            <person name="Gilna P."/>
            <person name="Han C.S."/>
            <person name="Lucas S."/>
            <person name="Misra M."/>
            <person name="Myers G.L."/>
            <person name="Richardson P."/>
            <person name="Tapia R."/>
            <person name="Thayer N."/>
            <person name="Thompson L.S."/>
            <person name="Brettin T.S."/>
            <person name="Henrissat B."/>
            <person name="Wilson D.B."/>
            <person name="McBride M.J."/>
        </authorList>
    </citation>
    <scope>NUCLEOTIDE SEQUENCE [LARGE SCALE GENOMIC DNA]</scope>
    <source>
        <strain>ATCC 33406 / DSM 1761 / JCM 20678 / CIP 103989 / IAM 12607 / NBRC 15051 / NCIMB 9469 / D465</strain>
    </source>
</reference>
<gene>
    <name evidence="1" type="primary">mutS</name>
    <name type="ordered locus">CHU_0147</name>
</gene>
<proteinExistence type="inferred from homology"/>
<dbReference type="EMBL" id="CP000383">
    <property type="protein sequence ID" value="ABG57440.1"/>
    <property type="molecule type" value="Genomic_DNA"/>
</dbReference>
<dbReference type="SMR" id="Q11YS6"/>
<dbReference type="STRING" id="269798.CHU_0147"/>
<dbReference type="KEGG" id="chu:CHU_0147"/>
<dbReference type="eggNOG" id="COG0249">
    <property type="taxonomic scope" value="Bacteria"/>
</dbReference>
<dbReference type="HOGENOM" id="CLU_002472_3_1_10"/>
<dbReference type="OrthoDB" id="9802448at2"/>
<dbReference type="Proteomes" id="UP000001822">
    <property type="component" value="Chromosome"/>
</dbReference>
<dbReference type="GO" id="GO:0005829">
    <property type="term" value="C:cytosol"/>
    <property type="evidence" value="ECO:0007669"/>
    <property type="project" value="TreeGrafter"/>
</dbReference>
<dbReference type="GO" id="GO:0005524">
    <property type="term" value="F:ATP binding"/>
    <property type="evidence" value="ECO:0007669"/>
    <property type="project" value="UniProtKB-UniRule"/>
</dbReference>
<dbReference type="GO" id="GO:0140664">
    <property type="term" value="F:ATP-dependent DNA damage sensor activity"/>
    <property type="evidence" value="ECO:0007669"/>
    <property type="project" value="InterPro"/>
</dbReference>
<dbReference type="GO" id="GO:0003684">
    <property type="term" value="F:damaged DNA binding"/>
    <property type="evidence" value="ECO:0007669"/>
    <property type="project" value="UniProtKB-UniRule"/>
</dbReference>
<dbReference type="GO" id="GO:0030983">
    <property type="term" value="F:mismatched DNA binding"/>
    <property type="evidence" value="ECO:0007669"/>
    <property type="project" value="InterPro"/>
</dbReference>
<dbReference type="GO" id="GO:0006298">
    <property type="term" value="P:mismatch repair"/>
    <property type="evidence" value="ECO:0007669"/>
    <property type="project" value="UniProtKB-UniRule"/>
</dbReference>
<dbReference type="CDD" id="cd03284">
    <property type="entry name" value="ABC_MutS1"/>
    <property type="match status" value="1"/>
</dbReference>
<dbReference type="FunFam" id="3.40.50.300:FF:000870">
    <property type="entry name" value="MutS protein homolog 4"/>
    <property type="match status" value="1"/>
</dbReference>
<dbReference type="Gene3D" id="1.10.1420.10">
    <property type="match status" value="2"/>
</dbReference>
<dbReference type="Gene3D" id="3.40.1170.10">
    <property type="entry name" value="DNA repair protein MutS, domain I"/>
    <property type="match status" value="1"/>
</dbReference>
<dbReference type="Gene3D" id="3.30.420.110">
    <property type="entry name" value="MutS, connector domain"/>
    <property type="match status" value="1"/>
</dbReference>
<dbReference type="Gene3D" id="3.40.50.300">
    <property type="entry name" value="P-loop containing nucleotide triphosphate hydrolases"/>
    <property type="match status" value="1"/>
</dbReference>
<dbReference type="HAMAP" id="MF_00096">
    <property type="entry name" value="MutS"/>
    <property type="match status" value="1"/>
</dbReference>
<dbReference type="InterPro" id="IPR005748">
    <property type="entry name" value="DNA_mismatch_repair_MutS"/>
</dbReference>
<dbReference type="InterPro" id="IPR007695">
    <property type="entry name" value="DNA_mismatch_repair_MutS-lik_N"/>
</dbReference>
<dbReference type="InterPro" id="IPR017261">
    <property type="entry name" value="DNA_mismatch_repair_MutS/MSH"/>
</dbReference>
<dbReference type="InterPro" id="IPR000432">
    <property type="entry name" value="DNA_mismatch_repair_MutS_C"/>
</dbReference>
<dbReference type="InterPro" id="IPR007861">
    <property type="entry name" value="DNA_mismatch_repair_MutS_clamp"/>
</dbReference>
<dbReference type="InterPro" id="IPR007696">
    <property type="entry name" value="DNA_mismatch_repair_MutS_core"/>
</dbReference>
<dbReference type="InterPro" id="IPR016151">
    <property type="entry name" value="DNA_mismatch_repair_MutS_N"/>
</dbReference>
<dbReference type="InterPro" id="IPR036187">
    <property type="entry name" value="DNA_mismatch_repair_MutS_sf"/>
</dbReference>
<dbReference type="InterPro" id="IPR007860">
    <property type="entry name" value="DNA_mmatch_repair_MutS_con_dom"/>
</dbReference>
<dbReference type="InterPro" id="IPR045076">
    <property type="entry name" value="MutS"/>
</dbReference>
<dbReference type="InterPro" id="IPR036678">
    <property type="entry name" value="MutS_con_dom_sf"/>
</dbReference>
<dbReference type="InterPro" id="IPR027417">
    <property type="entry name" value="P-loop_NTPase"/>
</dbReference>
<dbReference type="NCBIfam" id="TIGR01070">
    <property type="entry name" value="mutS1"/>
    <property type="match status" value="1"/>
</dbReference>
<dbReference type="NCBIfam" id="NF003810">
    <property type="entry name" value="PRK05399.1"/>
    <property type="match status" value="1"/>
</dbReference>
<dbReference type="PANTHER" id="PTHR11361:SF34">
    <property type="entry name" value="DNA MISMATCH REPAIR PROTEIN MSH1, MITOCHONDRIAL"/>
    <property type="match status" value="1"/>
</dbReference>
<dbReference type="PANTHER" id="PTHR11361">
    <property type="entry name" value="DNA MISMATCH REPAIR PROTEIN MUTS FAMILY MEMBER"/>
    <property type="match status" value="1"/>
</dbReference>
<dbReference type="Pfam" id="PF01624">
    <property type="entry name" value="MutS_I"/>
    <property type="match status" value="1"/>
</dbReference>
<dbReference type="Pfam" id="PF05188">
    <property type="entry name" value="MutS_II"/>
    <property type="match status" value="1"/>
</dbReference>
<dbReference type="Pfam" id="PF05192">
    <property type="entry name" value="MutS_III"/>
    <property type="match status" value="1"/>
</dbReference>
<dbReference type="Pfam" id="PF05190">
    <property type="entry name" value="MutS_IV"/>
    <property type="match status" value="1"/>
</dbReference>
<dbReference type="Pfam" id="PF00488">
    <property type="entry name" value="MutS_V"/>
    <property type="match status" value="1"/>
</dbReference>
<dbReference type="PIRSF" id="PIRSF037677">
    <property type="entry name" value="DNA_mis_repair_Msh6"/>
    <property type="match status" value="1"/>
</dbReference>
<dbReference type="SMART" id="SM00534">
    <property type="entry name" value="MUTSac"/>
    <property type="match status" value="1"/>
</dbReference>
<dbReference type="SMART" id="SM00533">
    <property type="entry name" value="MUTSd"/>
    <property type="match status" value="1"/>
</dbReference>
<dbReference type="SUPFAM" id="SSF55271">
    <property type="entry name" value="DNA repair protein MutS, domain I"/>
    <property type="match status" value="1"/>
</dbReference>
<dbReference type="SUPFAM" id="SSF53150">
    <property type="entry name" value="DNA repair protein MutS, domain II"/>
    <property type="match status" value="1"/>
</dbReference>
<dbReference type="SUPFAM" id="SSF48334">
    <property type="entry name" value="DNA repair protein MutS, domain III"/>
    <property type="match status" value="1"/>
</dbReference>
<dbReference type="SUPFAM" id="SSF52540">
    <property type="entry name" value="P-loop containing nucleoside triphosphate hydrolases"/>
    <property type="match status" value="1"/>
</dbReference>
<dbReference type="PROSITE" id="PS00486">
    <property type="entry name" value="DNA_MISMATCH_REPAIR_2"/>
    <property type="match status" value="1"/>
</dbReference>
<organism>
    <name type="scientific">Cytophaga hutchinsonii (strain ATCC 33406 / DSM 1761 / CIP 103989 / NBRC 15051 / NCIMB 9469 / D465)</name>
    <dbReference type="NCBI Taxonomy" id="269798"/>
    <lineage>
        <taxon>Bacteria</taxon>
        <taxon>Pseudomonadati</taxon>
        <taxon>Bacteroidota</taxon>
        <taxon>Cytophagia</taxon>
        <taxon>Cytophagales</taxon>
        <taxon>Cytophagaceae</taxon>
        <taxon>Cytophaga</taxon>
    </lineage>
</organism>
<protein>
    <recommendedName>
        <fullName evidence="1">DNA mismatch repair protein MutS</fullName>
    </recommendedName>
</protein>
<accession>Q11YS6</accession>
<name>MUTS_CYTH3</name>
<evidence type="ECO:0000255" key="1">
    <source>
        <dbReference type="HAMAP-Rule" id="MF_00096"/>
    </source>
</evidence>